<comment type="function">
    <text evidence="1 2 6 7">Involved in heme degradation (PubMed:15205415, PubMed:22627893, PubMed:28481076, PubMed:28607990). Catalyzes the degradation of heme to biliverdin, with the release of iron (PubMed:22627893, PubMed:28607990). Forms biliverdin beta and delta (PubMed:28607990). Binds heme with high efficiency (PubMed:15205415, PubMed:22627893).</text>
</comment>
<comment type="catalytic activity">
    <reaction evidence="7">
        <text>heme b + 3 AH2 + 3 O2 + 2 H(+) = biliverdin IXbeta + CO + Fe(2+) + 3 A + 3 H2O</text>
        <dbReference type="Rhea" id="RHEA:52228"/>
        <dbReference type="ChEBI" id="CHEBI:13193"/>
        <dbReference type="ChEBI" id="CHEBI:15377"/>
        <dbReference type="ChEBI" id="CHEBI:15378"/>
        <dbReference type="ChEBI" id="CHEBI:15379"/>
        <dbReference type="ChEBI" id="CHEBI:17245"/>
        <dbReference type="ChEBI" id="CHEBI:17499"/>
        <dbReference type="ChEBI" id="CHEBI:29033"/>
        <dbReference type="ChEBI" id="CHEBI:60344"/>
        <dbReference type="ChEBI" id="CHEBI:136509"/>
        <dbReference type="EC" id="1.14.99.58"/>
    </reaction>
</comment>
<comment type="catalytic activity">
    <reaction evidence="7">
        <text>heme b + 3 AH2 + 3 O2 + 3 H(+) = biliverdin IXdelta + CO + Fe(2+) + 3 A + 3 H2O</text>
        <dbReference type="Rhea" id="RHEA:52224"/>
        <dbReference type="ChEBI" id="CHEBI:13193"/>
        <dbReference type="ChEBI" id="CHEBI:15377"/>
        <dbReference type="ChEBI" id="CHEBI:15378"/>
        <dbReference type="ChEBI" id="CHEBI:15379"/>
        <dbReference type="ChEBI" id="CHEBI:17245"/>
        <dbReference type="ChEBI" id="CHEBI:17499"/>
        <dbReference type="ChEBI" id="CHEBI:29033"/>
        <dbReference type="ChEBI" id="CHEBI:60344"/>
        <dbReference type="ChEBI" id="CHEBI:136510"/>
        <dbReference type="EC" id="1.14.99.58"/>
    </reaction>
</comment>
<comment type="activity regulation">
    <text evidence="5 6">Activity is pH-dependent. A proximal hydrogen bond between Asp-132 and the heme axial ligant His-170 is essential for heme degradation activity (PubMed:28481076). Heme-degradation reaction is inhibited by iron chelators (PubMed:28352909).</text>
</comment>
<comment type="subunit">
    <text evidence="2 3 4">Homodimer (PubMed:22627893, PubMed:23013214). Interacts with HutX, leading to the transfer of the heme from HutX to apo-HutZ (PubMed:26807477).</text>
</comment>
<comment type="induction">
    <text evidence="1">Negatively regulated by iron.</text>
</comment>
<comment type="disruption phenotype">
    <text evidence="1">Mutant is defective in heme utilization.</text>
</comment>
<comment type="similarity">
    <text evidence="10">Belongs to the heme oxygenase HugZ/HutZ family.</text>
</comment>
<keyword id="KW-0002">3D-structure</keyword>
<keyword id="KW-0349">Heme</keyword>
<keyword id="KW-0408">Iron</keyword>
<keyword id="KW-0479">Metal-binding</keyword>
<keyword id="KW-0560">Oxidoreductase</keyword>
<keyword id="KW-1185">Reference proteome</keyword>
<feature type="chain" id="PRO_0000446445" description="Heme oxygenase HutZ">
    <location>
        <begin position="1"/>
        <end position="176"/>
    </location>
</feature>
<feature type="binding site" description="axial binding residue" evidence="11">
    <location>
        <position position="170"/>
    </location>
    <ligand>
        <name>heme</name>
        <dbReference type="ChEBI" id="CHEBI:30413"/>
    </ligand>
    <ligandPart>
        <name>Fe</name>
        <dbReference type="ChEBI" id="CHEBI:18248"/>
    </ligandPart>
</feature>
<feature type="site" description="Important for activity" evidence="11">
    <location>
        <position position="132"/>
    </location>
</feature>
<feature type="mutagenesis site" description="2-fold decrease in the amount of liberated Fe(2+)." evidence="5">
    <original>T</original>
    <variation>V</variation>
    <location>
        <position position="27"/>
    </location>
</feature>
<feature type="mutagenesis site" description="Cannot bind heme; when associated with A-170." evidence="6">
    <original>H</original>
    <variation>L</variation>
    <location>
        <position position="63"/>
    </location>
</feature>
<feature type="mutagenesis site" description="At pH 8.0, does not affect heme affinity and activity. At pH 6.0, shows a significant reduction in affinity for heme." evidence="6">
    <original>D</original>
    <variation>E</variation>
    <location>
        <position position="132"/>
    </location>
</feature>
<feature type="mutagenesis site" description="At pH 8.0, slight decrease in heme affinity. Almost complete loss of heme degradation activity." evidence="6">
    <original>D</original>
    <variation>L</variation>
    <variation>N</variation>
    <location>
        <position position="132"/>
    </location>
</feature>
<feature type="mutagenesis site" description="Can still bind heme. Retains heme degradation activity, but it eliminates pH-dependent activation. Cannot bind heme; when associated with L-63." evidence="6">
    <original>H</original>
    <variation>A</variation>
    <location>
        <position position="170"/>
    </location>
</feature>
<accession>Q9KL41</accession>
<protein>
    <recommendedName>
        <fullName evidence="10">Heme oxygenase HutZ</fullName>
        <ecNumber evidence="7">1.14.99.58</ecNumber>
    </recommendedName>
    <alternativeName>
        <fullName evidence="9">Heme-degrading enzyme HutZ</fullName>
    </alternativeName>
</protein>
<organism>
    <name type="scientific">Vibrio cholerae serotype O1 (strain ATCC 39315 / El Tor Inaba N16961)</name>
    <dbReference type="NCBI Taxonomy" id="243277"/>
    <lineage>
        <taxon>Bacteria</taxon>
        <taxon>Pseudomonadati</taxon>
        <taxon>Pseudomonadota</taxon>
        <taxon>Gammaproteobacteria</taxon>
        <taxon>Vibrionales</taxon>
        <taxon>Vibrionaceae</taxon>
        <taxon>Vibrio</taxon>
    </lineage>
</organism>
<name>HUTZ_VIBCH</name>
<sequence>MDQQVKQERLQGRLEPEIKEFRQERKTLQLATVDAQGRPNVSYAPFVQNQEGYFVLISHIARHARNLEVNPQVSIMMIEDETEAKQLFARKRLTFDAVASMVERDSELWCQVIAQMGERFGEIIDGLSQLQDFMLFRLQPEQGLFVKGFGQAYQVSGDDLVDFVHLEEGHRKISNG</sequence>
<proteinExistence type="evidence at protein level"/>
<gene>
    <name evidence="8" type="primary">hutZ</name>
    <name evidence="12" type="ordered locus">VC_A0907</name>
</gene>
<dbReference type="EC" id="1.14.99.58" evidence="7"/>
<dbReference type="EMBL" id="AE003853">
    <property type="protein sequence ID" value="AAF96804.1"/>
    <property type="molecule type" value="Genomic_DNA"/>
</dbReference>
<dbReference type="PIR" id="A82403">
    <property type="entry name" value="A82403"/>
</dbReference>
<dbReference type="RefSeq" id="NP_233292.1">
    <property type="nucleotide sequence ID" value="NC_002506.1"/>
</dbReference>
<dbReference type="RefSeq" id="WP_000372763.1">
    <property type="nucleotide sequence ID" value="NZ_LT906615.1"/>
</dbReference>
<dbReference type="PDB" id="3TGV">
    <property type="method" value="X-ray"/>
    <property type="resolution" value="2.00 A"/>
    <property type="chains" value="A/B/C/D=13-150"/>
</dbReference>
<dbReference type="PDBsum" id="3TGV"/>
<dbReference type="SMR" id="Q9KL41"/>
<dbReference type="STRING" id="243277.VC_A0907"/>
<dbReference type="BindingDB" id="Q9KL41"/>
<dbReference type="DNASU" id="2612246"/>
<dbReference type="EnsemblBacteria" id="AAF96804">
    <property type="protein sequence ID" value="AAF96804"/>
    <property type="gene ID" value="VC_A0907"/>
</dbReference>
<dbReference type="GeneID" id="89512936"/>
<dbReference type="KEGG" id="vch:VC_A0907"/>
<dbReference type="PATRIC" id="fig|243277.26.peg.3522"/>
<dbReference type="eggNOG" id="COG0748">
    <property type="taxonomic scope" value="Bacteria"/>
</dbReference>
<dbReference type="HOGENOM" id="CLU_093808_1_0_6"/>
<dbReference type="Proteomes" id="UP000000584">
    <property type="component" value="Chromosome 2"/>
</dbReference>
<dbReference type="GO" id="GO:0070967">
    <property type="term" value="F:coenzyme F420 binding"/>
    <property type="evidence" value="ECO:0000318"/>
    <property type="project" value="GO_Central"/>
</dbReference>
<dbReference type="GO" id="GO:0046872">
    <property type="term" value="F:metal ion binding"/>
    <property type="evidence" value="ECO:0007669"/>
    <property type="project" value="UniProtKB-KW"/>
</dbReference>
<dbReference type="GO" id="GO:0016627">
    <property type="term" value="F:oxidoreductase activity, acting on the CH-CH group of donors"/>
    <property type="evidence" value="ECO:0000318"/>
    <property type="project" value="GO_Central"/>
</dbReference>
<dbReference type="FunFam" id="2.30.110.10:FF:000022">
    <property type="entry name" value="Heme utilization protein HutZ"/>
    <property type="match status" value="1"/>
</dbReference>
<dbReference type="Gene3D" id="2.30.110.10">
    <property type="entry name" value="Electron Transport, Fmn-binding Protein, Chain A"/>
    <property type="match status" value="1"/>
</dbReference>
<dbReference type="InterPro" id="IPR052019">
    <property type="entry name" value="F420H2_bilvrd_red/Heme_oxyg"/>
</dbReference>
<dbReference type="InterPro" id="IPR014419">
    <property type="entry name" value="HutZ"/>
</dbReference>
<dbReference type="InterPro" id="IPR011576">
    <property type="entry name" value="Pyridox_Oxase_N"/>
</dbReference>
<dbReference type="InterPro" id="IPR012349">
    <property type="entry name" value="Split_barrel_FMN-bd"/>
</dbReference>
<dbReference type="NCBIfam" id="TIGR04110">
    <property type="entry name" value="heme_HutZ"/>
    <property type="match status" value="1"/>
</dbReference>
<dbReference type="PANTHER" id="PTHR35176">
    <property type="entry name" value="HEME OXYGENASE HI_0854-RELATED"/>
    <property type="match status" value="1"/>
</dbReference>
<dbReference type="PANTHER" id="PTHR35176:SF6">
    <property type="entry name" value="HEME OXYGENASE HI_0854-RELATED"/>
    <property type="match status" value="1"/>
</dbReference>
<dbReference type="Pfam" id="PF01243">
    <property type="entry name" value="PNPOx_N"/>
    <property type="match status" value="1"/>
</dbReference>
<dbReference type="PIRSF" id="PIRSF004633">
    <property type="entry name" value="UCP_PLP_oxd"/>
    <property type="match status" value="1"/>
</dbReference>
<dbReference type="SUPFAM" id="SSF50475">
    <property type="entry name" value="FMN-binding split barrel"/>
    <property type="match status" value="1"/>
</dbReference>
<reference key="1">
    <citation type="journal article" date="2000" name="Nature">
        <title>DNA sequence of both chromosomes of the cholera pathogen Vibrio cholerae.</title>
        <authorList>
            <person name="Heidelberg J.F."/>
            <person name="Eisen J.A."/>
            <person name="Nelson W.C."/>
            <person name="Clayton R.A."/>
            <person name="Gwinn M.L."/>
            <person name="Dodson R.J."/>
            <person name="Haft D.H."/>
            <person name="Hickey E.K."/>
            <person name="Peterson J.D."/>
            <person name="Umayam L.A."/>
            <person name="Gill S.R."/>
            <person name="Nelson K.E."/>
            <person name="Read T.D."/>
            <person name="Tettelin H."/>
            <person name="Richardson D.L."/>
            <person name="Ermolaeva M.D."/>
            <person name="Vamathevan J.J."/>
            <person name="Bass S."/>
            <person name="Qin H."/>
            <person name="Dragoi I."/>
            <person name="Sellers P."/>
            <person name="McDonald L.A."/>
            <person name="Utterback T.R."/>
            <person name="Fleischmann R.D."/>
            <person name="Nierman W.C."/>
            <person name="White O."/>
            <person name="Salzberg S.L."/>
            <person name="Smith H.O."/>
            <person name="Colwell R.R."/>
            <person name="Mekalanos J.J."/>
            <person name="Venter J.C."/>
            <person name="Fraser C.M."/>
        </authorList>
    </citation>
    <scope>NUCLEOTIDE SEQUENCE [LARGE SCALE GENOMIC DNA]</scope>
    <source>
        <strain>ATCC 39315 / El Tor Inaba N16961</strain>
    </source>
</reference>
<reference key="2">
    <citation type="journal article" date="2004" name="J. Bacteriol.">
        <title>HutZ is required for efficient heme utilization in Vibrio cholerae.</title>
        <authorList>
            <person name="Wyckoff E.E."/>
            <person name="Schmitt M."/>
            <person name="Wilks A."/>
            <person name="Payne S.M."/>
        </authorList>
    </citation>
    <scope>FUNCTION</scope>
    <scope>HEME-BINDING</scope>
    <scope>INDUCTION</scope>
    <scope>DISRUPTION PHENOTYPE</scope>
    <source>
        <strain>El Tor Lou15</strain>
    </source>
</reference>
<reference key="3">
    <citation type="journal article" date="2012" name="Chem. Commun. (Camb.)">
        <title>A heme degradation enzyme, HutZ, from Vibrio cholerae.</title>
        <authorList>
            <person name="Uchida T."/>
            <person name="Sekine Y."/>
            <person name="Matsui T."/>
            <person name="Ikeda-Saito M."/>
            <person name="Ishimori K."/>
        </authorList>
    </citation>
    <scope>FUNCTION IN HEME DEGRADATION</scope>
    <scope>HEME-BINDING</scope>
    <scope>SUBUNIT</scope>
</reference>
<reference key="4">
    <citation type="journal article" date="2016" name="Biochemistry">
        <title>Cytoplasmic heme-binding protein (HutX) from Vibrio cholerae is an intracellular heme transport protein for the heme-degrading enzyme, HutZ.</title>
        <authorList>
            <person name="Sekine Y."/>
            <person name="Tanzawa T."/>
            <person name="Tanaka Y."/>
            <person name="Ishimori K."/>
            <person name="Uchida T."/>
        </authorList>
    </citation>
    <scope>INTERACTION WITH HUTX</scope>
</reference>
<reference key="5">
    <citation type="journal article" date="2017" name="Biochemistry">
        <title>Heme proximal hydrogen bonding between His170 and Asp132 plays an essential role in the heme degradation reaction of HutZ from Vibrio cholerae.</title>
        <authorList>
            <person name="Uchida T."/>
            <person name="Dojun N."/>
            <person name="Sekine Y."/>
            <person name="Ishimori K."/>
        </authorList>
    </citation>
    <scope>FUNCTION</scope>
    <scope>ACTIVITY REGULATION</scope>
    <scope>HEME-BINDING</scope>
    <scope>MUTAGENESIS OF HIS-63; ASP-132 AND HIS-170</scope>
</reference>
<reference key="6">
    <citation type="journal article" date="2017" name="Dalton Trans.">
        <title>Iron chelators inhibit the heme-degradation reaction by HutZ from Vibrio cholerae.</title>
        <authorList>
            <person name="Dojun N."/>
            <person name="Sekine Y."/>
            <person name="Ishimori K."/>
            <person name="Uchida T."/>
        </authorList>
    </citation>
    <scope>ACTIVITY REGULATION</scope>
    <scope>MUTAGENESIS OF THR-27</scope>
</reference>
<reference key="7">
    <citation type="journal article" date="2017" name="Dalton Trans.">
        <title>Reaction intermediates in the heme degradation reaction by HutZ from Vibrio cholerae.</title>
        <authorList>
            <person name="Uchida T."/>
            <person name="Sekine Y."/>
            <person name="Dojun N."/>
            <person name="Lewis-Ballester A."/>
            <person name="Ishigami I."/>
            <person name="Matsui T."/>
            <person name="Yeh S.R."/>
            <person name="Ishimori K."/>
        </authorList>
    </citation>
    <scope>FUNCTION</scope>
    <scope>CATALYTIC ACTIVITY</scope>
</reference>
<reference evidence="13" key="8">
    <citation type="journal article" date="2012" name="BMC Struct. Biol.">
        <title>Crystal structure of HutZ, a heme storage protein from Vibrio cholerae: A structural mismatch observed in the region of high sequence conservation.</title>
        <authorList>
            <person name="Liu X."/>
            <person name="Gong J."/>
            <person name="Wei T."/>
            <person name="Wang Z."/>
            <person name="Du Q."/>
            <person name="Zhu D."/>
            <person name="Huang Y."/>
            <person name="Xu S."/>
            <person name="Gu L."/>
        </authorList>
    </citation>
    <scope>X-RAY CRYSTALLOGRAPHY (2.00 ANGSTROMS) OF 13-150</scope>
    <scope>SUBUNIT</scope>
    <source>
        <strain>ATCC 39315 / El Tor Inaba N16961</strain>
    </source>
</reference>
<evidence type="ECO:0000269" key="1">
    <source>
    </source>
</evidence>
<evidence type="ECO:0000269" key="2">
    <source>
    </source>
</evidence>
<evidence type="ECO:0000269" key="3">
    <source>
    </source>
</evidence>
<evidence type="ECO:0000269" key="4">
    <source>
    </source>
</evidence>
<evidence type="ECO:0000269" key="5">
    <source>
    </source>
</evidence>
<evidence type="ECO:0000269" key="6">
    <source>
    </source>
</evidence>
<evidence type="ECO:0000269" key="7">
    <source>
    </source>
</evidence>
<evidence type="ECO:0000303" key="8">
    <source>
    </source>
</evidence>
<evidence type="ECO:0000303" key="9">
    <source>
    </source>
</evidence>
<evidence type="ECO:0000305" key="10"/>
<evidence type="ECO:0000305" key="11">
    <source>
    </source>
</evidence>
<evidence type="ECO:0000312" key="12">
    <source>
        <dbReference type="EMBL" id="AAF96804.1"/>
    </source>
</evidence>
<evidence type="ECO:0007744" key="13">
    <source>
        <dbReference type="PDB" id="3TGV"/>
    </source>
</evidence>